<evidence type="ECO:0000255" key="1">
    <source>
        <dbReference type="HAMAP-Rule" id="MF_00344"/>
    </source>
</evidence>
<sequence>MTENIHKHRILILDFGSQYTQLVARRVRELGVYCELWAWDVTEAQIRDFNPSGIILSGGPESTTEENSPRAPQYVFEAGVPVFGVCYGMQTMAMQLGGHVEASNEREFGYAQVEVVNDSALVRGIEDALTADGKPLLDVWMSHGDKVTAIPSDFVTVASTESCPFAIMANEEKRFYGVQFHPEVTHTRQGMRMLERFVRDICQCEALWTPAKIIDDAVARIREQVGDDKVILGLSGGVDSSVTAMLLHRAIGKNLTCVFVDNGLLRLNEAEQVLDMFGDHFGLNIVHVPAEARFLSALAGENDPEAKRKIIGRVFVEVFDEEALKLEDVKWLAQGTIYPDVIESAASATGKAHVIKSHHNVGGLPKEMKMGLVEPLKELFKDEVRKIGLELGLPYDMLYRHPFPGPGLGVRVLGEVKKEYCDLLRRADAIFIEELRKADLYDKVSQAFTVFLPVRSVGVMGDGRKYDWVVSLRAVETIDFMTAHWAHLPYDFLGRVSNRIINEVNGISRVVYDISGKPPATIEWE</sequence>
<feature type="chain" id="PRO_1000120288" description="GMP synthase [glutamine-hydrolyzing]">
    <location>
        <begin position="1"/>
        <end position="525"/>
    </location>
</feature>
<feature type="domain" description="Glutamine amidotransferase type-1" evidence="1">
    <location>
        <begin position="9"/>
        <end position="207"/>
    </location>
</feature>
<feature type="domain" description="GMPS ATP-PPase" evidence="1">
    <location>
        <begin position="208"/>
        <end position="400"/>
    </location>
</feature>
<feature type="active site" description="Nucleophile" evidence="1">
    <location>
        <position position="86"/>
    </location>
</feature>
<feature type="active site" evidence="1">
    <location>
        <position position="181"/>
    </location>
</feature>
<feature type="active site" evidence="1">
    <location>
        <position position="183"/>
    </location>
</feature>
<feature type="binding site" evidence="1">
    <location>
        <begin position="235"/>
        <end position="241"/>
    </location>
    <ligand>
        <name>ATP</name>
        <dbReference type="ChEBI" id="CHEBI:30616"/>
    </ligand>
</feature>
<proteinExistence type="inferred from homology"/>
<reference key="1">
    <citation type="journal article" date="2009" name="PLoS Genet.">
        <title>Organised genome dynamics in the Escherichia coli species results in highly diverse adaptive paths.</title>
        <authorList>
            <person name="Touchon M."/>
            <person name="Hoede C."/>
            <person name="Tenaillon O."/>
            <person name="Barbe V."/>
            <person name="Baeriswyl S."/>
            <person name="Bidet P."/>
            <person name="Bingen E."/>
            <person name="Bonacorsi S."/>
            <person name="Bouchier C."/>
            <person name="Bouvet O."/>
            <person name="Calteau A."/>
            <person name="Chiapello H."/>
            <person name="Clermont O."/>
            <person name="Cruveiller S."/>
            <person name="Danchin A."/>
            <person name="Diard M."/>
            <person name="Dossat C."/>
            <person name="Karoui M.E."/>
            <person name="Frapy E."/>
            <person name="Garry L."/>
            <person name="Ghigo J.M."/>
            <person name="Gilles A.M."/>
            <person name="Johnson J."/>
            <person name="Le Bouguenec C."/>
            <person name="Lescat M."/>
            <person name="Mangenot S."/>
            <person name="Martinez-Jehanne V."/>
            <person name="Matic I."/>
            <person name="Nassif X."/>
            <person name="Oztas S."/>
            <person name="Petit M.A."/>
            <person name="Pichon C."/>
            <person name="Rouy Z."/>
            <person name="Ruf C.S."/>
            <person name="Schneider D."/>
            <person name="Tourret J."/>
            <person name="Vacherie B."/>
            <person name="Vallenet D."/>
            <person name="Medigue C."/>
            <person name="Rocha E.P.C."/>
            <person name="Denamur E."/>
        </authorList>
    </citation>
    <scope>NUCLEOTIDE SEQUENCE [LARGE SCALE GENOMIC DNA]</scope>
    <source>
        <strain>UMN026 / ExPEC</strain>
    </source>
</reference>
<organism>
    <name type="scientific">Escherichia coli O17:K52:H18 (strain UMN026 / ExPEC)</name>
    <dbReference type="NCBI Taxonomy" id="585056"/>
    <lineage>
        <taxon>Bacteria</taxon>
        <taxon>Pseudomonadati</taxon>
        <taxon>Pseudomonadota</taxon>
        <taxon>Gammaproteobacteria</taxon>
        <taxon>Enterobacterales</taxon>
        <taxon>Enterobacteriaceae</taxon>
        <taxon>Escherichia</taxon>
    </lineage>
</organism>
<name>GUAA_ECOLU</name>
<dbReference type="EC" id="6.3.5.2" evidence="1"/>
<dbReference type="EMBL" id="CU928163">
    <property type="protein sequence ID" value="CAR14000.1"/>
    <property type="molecule type" value="Genomic_DNA"/>
</dbReference>
<dbReference type="RefSeq" id="WP_000138279.1">
    <property type="nucleotide sequence ID" value="NC_011751.1"/>
</dbReference>
<dbReference type="RefSeq" id="YP_002413527.1">
    <property type="nucleotide sequence ID" value="NC_011751.1"/>
</dbReference>
<dbReference type="SMR" id="B7N691"/>
<dbReference type="STRING" id="585056.ECUMN_2823"/>
<dbReference type="MEROPS" id="C26.957"/>
<dbReference type="KEGG" id="eum:ECUMN_2823"/>
<dbReference type="PATRIC" id="fig|585056.7.peg.3007"/>
<dbReference type="HOGENOM" id="CLU_014340_0_5_6"/>
<dbReference type="UniPathway" id="UPA00189">
    <property type="reaction ID" value="UER00296"/>
</dbReference>
<dbReference type="Proteomes" id="UP000007097">
    <property type="component" value="Chromosome"/>
</dbReference>
<dbReference type="GO" id="GO:0005829">
    <property type="term" value="C:cytosol"/>
    <property type="evidence" value="ECO:0007669"/>
    <property type="project" value="TreeGrafter"/>
</dbReference>
<dbReference type="GO" id="GO:0005524">
    <property type="term" value="F:ATP binding"/>
    <property type="evidence" value="ECO:0007669"/>
    <property type="project" value="UniProtKB-UniRule"/>
</dbReference>
<dbReference type="GO" id="GO:0003921">
    <property type="term" value="F:GMP synthase activity"/>
    <property type="evidence" value="ECO:0007669"/>
    <property type="project" value="InterPro"/>
</dbReference>
<dbReference type="CDD" id="cd01742">
    <property type="entry name" value="GATase1_GMP_Synthase"/>
    <property type="match status" value="1"/>
</dbReference>
<dbReference type="CDD" id="cd01997">
    <property type="entry name" value="GMP_synthase_C"/>
    <property type="match status" value="1"/>
</dbReference>
<dbReference type="FunFam" id="3.30.300.10:FF:000002">
    <property type="entry name" value="GMP synthase [glutamine-hydrolyzing]"/>
    <property type="match status" value="1"/>
</dbReference>
<dbReference type="FunFam" id="3.40.50.620:FF:000001">
    <property type="entry name" value="GMP synthase [glutamine-hydrolyzing]"/>
    <property type="match status" value="1"/>
</dbReference>
<dbReference type="FunFam" id="3.40.50.880:FF:000001">
    <property type="entry name" value="GMP synthase [glutamine-hydrolyzing]"/>
    <property type="match status" value="1"/>
</dbReference>
<dbReference type="Gene3D" id="3.30.300.10">
    <property type="match status" value="1"/>
</dbReference>
<dbReference type="Gene3D" id="3.40.50.880">
    <property type="match status" value="1"/>
</dbReference>
<dbReference type="Gene3D" id="3.40.50.620">
    <property type="entry name" value="HUPs"/>
    <property type="match status" value="1"/>
</dbReference>
<dbReference type="HAMAP" id="MF_00344">
    <property type="entry name" value="GMP_synthase"/>
    <property type="match status" value="1"/>
</dbReference>
<dbReference type="InterPro" id="IPR029062">
    <property type="entry name" value="Class_I_gatase-like"/>
</dbReference>
<dbReference type="InterPro" id="IPR017926">
    <property type="entry name" value="GATASE"/>
</dbReference>
<dbReference type="InterPro" id="IPR001674">
    <property type="entry name" value="GMP_synth_C"/>
</dbReference>
<dbReference type="InterPro" id="IPR004739">
    <property type="entry name" value="GMP_synth_GATase"/>
</dbReference>
<dbReference type="InterPro" id="IPR022955">
    <property type="entry name" value="GMP_synthase"/>
</dbReference>
<dbReference type="InterPro" id="IPR025777">
    <property type="entry name" value="GMPS_ATP_PPase_dom"/>
</dbReference>
<dbReference type="InterPro" id="IPR022310">
    <property type="entry name" value="NAD/GMP_synthase"/>
</dbReference>
<dbReference type="InterPro" id="IPR014729">
    <property type="entry name" value="Rossmann-like_a/b/a_fold"/>
</dbReference>
<dbReference type="NCBIfam" id="TIGR00884">
    <property type="entry name" value="guaA_Cterm"/>
    <property type="match status" value="1"/>
</dbReference>
<dbReference type="NCBIfam" id="TIGR00888">
    <property type="entry name" value="guaA_Nterm"/>
    <property type="match status" value="1"/>
</dbReference>
<dbReference type="NCBIfam" id="NF000848">
    <property type="entry name" value="PRK00074.1"/>
    <property type="match status" value="1"/>
</dbReference>
<dbReference type="PANTHER" id="PTHR11922:SF2">
    <property type="entry name" value="GMP SYNTHASE [GLUTAMINE-HYDROLYZING]"/>
    <property type="match status" value="1"/>
</dbReference>
<dbReference type="PANTHER" id="PTHR11922">
    <property type="entry name" value="GMP SYNTHASE-RELATED"/>
    <property type="match status" value="1"/>
</dbReference>
<dbReference type="Pfam" id="PF00117">
    <property type="entry name" value="GATase"/>
    <property type="match status" value="1"/>
</dbReference>
<dbReference type="Pfam" id="PF00958">
    <property type="entry name" value="GMP_synt_C"/>
    <property type="match status" value="1"/>
</dbReference>
<dbReference type="Pfam" id="PF02540">
    <property type="entry name" value="NAD_synthase"/>
    <property type="match status" value="1"/>
</dbReference>
<dbReference type="PRINTS" id="PR00097">
    <property type="entry name" value="ANTSNTHASEII"/>
</dbReference>
<dbReference type="PRINTS" id="PR00099">
    <property type="entry name" value="CPSGATASE"/>
</dbReference>
<dbReference type="PRINTS" id="PR00096">
    <property type="entry name" value="GATASE"/>
</dbReference>
<dbReference type="SUPFAM" id="SSF52402">
    <property type="entry name" value="Adenine nucleotide alpha hydrolases-like"/>
    <property type="match status" value="1"/>
</dbReference>
<dbReference type="SUPFAM" id="SSF52317">
    <property type="entry name" value="Class I glutamine amidotransferase-like"/>
    <property type="match status" value="1"/>
</dbReference>
<dbReference type="SUPFAM" id="SSF54810">
    <property type="entry name" value="GMP synthetase C-terminal dimerisation domain"/>
    <property type="match status" value="1"/>
</dbReference>
<dbReference type="PROSITE" id="PS51273">
    <property type="entry name" value="GATASE_TYPE_1"/>
    <property type="match status" value="1"/>
</dbReference>
<dbReference type="PROSITE" id="PS51553">
    <property type="entry name" value="GMPS_ATP_PPASE"/>
    <property type="match status" value="1"/>
</dbReference>
<accession>B7N691</accession>
<keyword id="KW-0067">ATP-binding</keyword>
<keyword id="KW-0315">Glutamine amidotransferase</keyword>
<keyword id="KW-0332">GMP biosynthesis</keyword>
<keyword id="KW-0436">Ligase</keyword>
<keyword id="KW-0547">Nucleotide-binding</keyword>
<keyword id="KW-0658">Purine biosynthesis</keyword>
<comment type="function">
    <text evidence="1">Catalyzes the synthesis of GMP from XMP.</text>
</comment>
<comment type="catalytic activity">
    <reaction evidence="1">
        <text>XMP + L-glutamine + ATP + H2O = GMP + L-glutamate + AMP + diphosphate + 2 H(+)</text>
        <dbReference type="Rhea" id="RHEA:11680"/>
        <dbReference type="ChEBI" id="CHEBI:15377"/>
        <dbReference type="ChEBI" id="CHEBI:15378"/>
        <dbReference type="ChEBI" id="CHEBI:29985"/>
        <dbReference type="ChEBI" id="CHEBI:30616"/>
        <dbReference type="ChEBI" id="CHEBI:33019"/>
        <dbReference type="ChEBI" id="CHEBI:57464"/>
        <dbReference type="ChEBI" id="CHEBI:58115"/>
        <dbReference type="ChEBI" id="CHEBI:58359"/>
        <dbReference type="ChEBI" id="CHEBI:456215"/>
        <dbReference type="EC" id="6.3.5.2"/>
    </reaction>
</comment>
<comment type="pathway">
    <text evidence="1">Purine metabolism; GMP biosynthesis; GMP from XMP (L-Gln route): step 1/1.</text>
</comment>
<comment type="subunit">
    <text evidence="1">Homodimer.</text>
</comment>
<gene>
    <name evidence="1" type="primary">guaA</name>
    <name type="ordered locus">ECUMN_2823</name>
</gene>
<protein>
    <recommendedName>
        <fullName evidence="1">GMP synthase [glutamine-hydrolyzing]</fullName>
        <ecNumber evidence="1">6.3.5.2</ecNumber>
    </recommendedName>
    <alternativeName>
        <fullName evidence="1">GMP synthetase</fullName>
    </alternativeName>
    <alternativeName>
        <fullName evidence="1">Glutamine amidotransferase</fullName>
    </alternativeName>
</protein>